<sequence>MSSLICFIFLFLFSFITSFTASAQNPFYLYHNCSITTTYSSNSTYSTNLKTLLSSLSSRNASYSTGFQNATAGQAPDMVTGLFLCRGNVSPEVCRSCIALSVNESLSRCPNEREAVFYYEQCMLRYSNRNILSTLNTDGGVFMQNARNPISVKQDRFRDLVLNPMNLAAIEAARSIKRFAVTKFDLNALQSLYGMVQCTPDLTEQDCLDCLQQSINQVTYDKIGGRTFLPSCTSRYDNYEFYNEFNVGTPQDSSPRPGKGGNSSVIVIAVVVPITVLFLLFVAFFSVRRAKRKKTIGAIPLFKVKRKETEVTEPPAETTDGDDITTAGSLQFDFKAIVAATDIFLPINKLGQGGFGEVYKGTFPSGVQVAVKRLSKNSGQGEKEFENEVVVVAKLQHRNLVKLLGYCLEGEEKILVYEFVPNKSLDYFLFDPTMQGQLDWSRRYKIIGGIARGILYLHQDSRLTIIHRDLKAGNILLDADMNPKVADFGMARIFGMDQTEANTRRVVGTYGYMAPEYAMYGKFSMKSDVYSFGVLVLEIVSGMKNSSLDQMDGSISNLVTYTWRLWSNGSPSELVDPSFGDNYQTSEITRCIHIALLCVQEDANDRPTMSAIVQMLTTSSIALAVPRPPGFFLRSKQEQAERACPSMDTSDLFSIDEASITSVAPR</sequence>
<proteinExistence type="evidence at transcript level"/>
<protein>
    <recommendedName>
        <fullName>Putative cysteine-rich receptor-like protein kinase 20</fullName>
        <shortName>Cysteine-rich RLK20</shortName>
        <ecNumber>2.7.11.-</ecNumber>
    </recommendedName>
</protein>
<gene>
    <name type="primary">CRK20</name>
    <name type="ordered locus">At4g23280</name>
    <name type="ORF">F21P8.170</name>
</gene>
<comment type="catalytic activity">
    <reaction>
        <text>L-seryl-[protein] + ATP = O-phospho-L-seryl-[protein] + ADP + H(+)</text>
        <dbReference type="Rhea" id="RHEA:17989"/>
        <dbReference type="Rhea" id="RHEA-COMP:9863"/>
        <dbReference type="Rhea" id="RHEA-COMP:11604"/>
        <dbReference type="ChEBI" id="CHEBI:15378"/>
        <dbReference type="ChEBI" id="CHEBI:29999"/>
        <dbReference type="ChEBI" id="CHEBI:30616"/>
        <dbReference type="ChEBI" id="CHEBI:83421"/>
        <dbReference type="ChEBI" id="CHEBI:456216"/>
    </reaction>
</comment>
<comment type="catalytic activity">
    <reaction>
        <text>L-threonyl-[protein] + ATP = O-phospho-L-threonyl-[protein] + ADP + H(+)</text>
        <dbReference type="Rhea" id="RHEA:46608"/>
        <dbReference type="Rhea" id="RHEA-COMP:11060"/>
        <dbReference type="Rhea" id="RHEA-COMP:11605"/>
        <dbReference type="ChEBI" id="CHEBI:15378"/>
        <dbReference type="ChEBI" id="CHEBI:30013"/>
        <dbReference type="ChEBI" id="CHEBI:30616"/>
        <dbReference type="ChEBI" id="CHEBI:61977"/>
        <dbReference type="ChEBI" id="CHEBI:456216"/>
    </reaction>
</comment>
<comment type="subcellular location">
    <subcellularLocation>
        <location evidence="8">Membrane</location>
        <topology evidence="8">Single-pass membrane protein</topology>
    </subcellularLocation>
</comment>
<comment type="induction">
    <text evidence="6 7">By salicylic acid (SA) or by a bacterial pathogen infection.</text>
</comment>
<comment type="similarity">
    <text evidence="3">Belongs to the protein kinase superfamily. Ser/Thr protein kinase family. CRK subfamily.</text>
</comment>
<comment type="sequence caution" evidence="8">
    <conflict type="erroneous gene model prediction">
        <sequence resource="EMBL-CDS" id="CAA18475"/>
    </conflict>
</comment>
<comment type="sequence caution" evidence="8">
    <conflict type="erroneous gene model prediction">
        <sequence resource="EMBL-CDS" id="CAB79283"/>
    </conflict>
</comment>
<accession>O65479</accession>
<accession>F4JNH5</accession>
<organism>
    <name type="scientific">Arabidopsis thaliana</name>
    <name type="common">Mouse-ear cress</name>
    <dbReference type="NCBI Taxonomy" id="3702"/>
    <lineage>
        <taxon>Eukaryota</taxon>
        <taxon>Viridiplantae</taxon>
        <taxon>Streptophyta</taxon>
        <taxon>Embryophyta</taxon>
        <taxon>Tracheophyta</taxon>
        <taxon>Spermatophyta</taxon>
        <taxon>Magnoliopsida</taxon>
        <taxon>eudicotyledons</taxon>
        <taxon>Gunneridae</taxon>
        <taxon>Pentapetalae</taxon>
        <taxon>rosids</taxon>
        <taxon>malvids</taxon>
        <taxon>Brassicales</taxon>
        <taxon>Brassicaceae</taxon>
        <taxon>Camelineae</taxon>
        <taxon>Arabidopsis</taxon>
    </lineage>
</organism>
<dbReference type="EC" id="2.7.11.-"/>
<dbReference type="EMBL" id="AL022347">
    <property type="protein sequence ID" value="CAA18475.1"/>
    <property type="status" value="ALT_SEQ"/>
    <property type="molecule type" value="Genomic_DNA"/>
</dbReference>
<dbReference type="EMBL" id="AL161559">
    <property type="protein sequence ID" value="CAB79283.1"/>
    <property type="status" value="ALT_SEQ"/>
    <property type="molecule type" value="Genomic_DNA"/>
</dbReference>
<dbReference type="EMBL" id="CP002687">
    <property type="protein sequence ID" value="AEE84733.2"/>
    <property type="molecule type" value="Genomic_DNA"/>
</dbReference>
<dbReference type="PIR" id="T04845">
    <property type="entry name" value="T04845"/>
</dbReference>
<dbReference type="RefSeq" id="NP_001320044.1">
    <property type="nucleotide sequence ID" value="NM_001341595.1"/>
</dbReference>
<dbReference type="SMR" id="O65479"/>
<dbReference type="FunCoup" id="O65479">
    <property type="interactions" value="251"/>
</dbReference>
<dbReference type="STRING" id="3702.O65479"/>
<dbReference type="GlyCosmos" id="O65479">
    <property type="glycosylation" value="6 sites, No reported glycans"/>
</dbReference>
<dbReference type="GlyGen" id="O65479">
    <property type="glycosylation" value="6 sites"/>
</dbReference>
<dbReference type="iPTMnet" id="O65479"/>
<dbReference type="PaxDb" id="3702-AT4G23280.1"/>
<dbReference type="ProteomicsDB" id="222681"/>
<dbReference type="EnsemblPlants" id="AT4G23280.1">
    <property type="protein sequence ID" value="AT4G23280.1"/>
    <property type="gene ID" value="AT4G23280"/>
</dbReference>
<dbReference type="GeneID" id="828427"/>
<dbReference type="Gramene" id="AT4G23280.1">
    <property type="protein sequence ID" value="AT4G23280.1"/>
    <property type="gene ID" value="AT4G23280"/>
</dbReference>
<dbReference type="KEGG" id="ath:AT4G23280"/>
<dbReference type="Araport" id="AT4G23280"/>
<dbReference type="TAIR" id="AT4G23280">
    <property type="gene designation" value="CRK20"/>
</dbReference>
<dbReference type="eggNOG" id="ENOG502QWDY">
    <property type="taxonomic scope" value="Eukaryota"/>
</dbReference>
<dbReference type="HOGENOM" id="CLU_000288_35_2_1"/>
<dbReference type="InParanoid" id="O65479"/>
<dbReference type="OrthoDB" id="688481at2759"/>
<dbReference type="PhylomeDB" id="O65479"/>
<dbReference type="PRO" id="PR:O65479"/>
<dbReference type="Proteomes" id="UP000006548">
    <property type="component" value="Chromosome 4"/>
</dbReference>
<dbReference type="ExpressionAtlas" id="O65479">
    <property type="expression patterns" value="baseline and differential"/>
</dbReference>
<dbReference type="GO" id="GO:0016020">
    <property type="term" value="C:membrane"/>
    <property type="evidence" value="ECO:0007669"/>
    <property type="project" value="UniProtKB-SubCell"/>
</dbReference>
<dbReference type="GO" id="GO:0005524">
    <property type="term" value="F:ATP binding"/>
    <property type="evidence" value="ECO:0007669"/>
    <property type="project" value="UniProtKB-KW"/>
</dbReference>
<dbReference type="GO" id="GO:0106310">
    <property type="term" value="F:protein serine kinase activity"/>
    <property type="evidence" value="ECO:0007669"/>
    <property type="project" value="RHEA"/>
</dbReference>
<dbReference type="GO" id="GO:0004674">
    <property type="term" value="F:protein serine/threonine kinase activity"/>
    <property type="evidence" value="ECO:0007669"/>
    <property type="project" value="UniProtKB-KW"/>
</dbReference>
<dbReference type="CDD" id="cd23509">
    <property type="entry name" value="Gnk2-like"/>
    <property type="match status" value="2"/>
</dbReference>
<dbReference type="CDD" id="cd14066">
    <property type="entry name" value="STKc_IRAK"/>
    <property type="match status" value="1"/>
</dbReference>
<dbReference type="FunFam" id="3.30.430.20:FF:000002">
    <property type="entry name" value="Cysteine-rich receptor-like protein kinase 10"/>
    <property type="match status" value="1"/>
</dbReference>
<dbReference type="FunFam" id="1.10.510.10:FF:000129">
    <property type="entry name" value="cysteine-rich receptor-like protein kinase 10"/>
    <property type="match status" value="1"/>
</dbReference>
<dbReference type="FunFam" id="3.30.430.20:FF:000003">
    <property type="entry name" value="Cysteine-rich RLK (RECEPTOR-like protein kinase) 10"/>
    <property type="match status" value="1"/>
</dbReference>
<dbReference type="FunFam" id="3.30.200.20:FF:000727">
    <property type="entry name" value="Cysteine-rich RLK (RECEPTOR-like protein kinase) 23"/>
    <property type="match status" value="1"/>
</dbReference>
<dbReference type="Gene3D" id="3.30.430.20">
    <property type="entry name" value="Gnk2 domain, C-X8-C-X2-C motif"/>
    <property type="match status" value="2"/>
</dbReference>
<dbReference type="Gene3D" id="3.30.200.20">
    <property type="entry name" value="Phosphorylase Kinase, domain 1"/>
    <property type="match status" value="1"/>
</dbReference>
<dbReference type="Gene3D" id="1.10.510.10">
    <property type="entry name" value="Transferase(Phosphotransferase) domain 1"/>
    <property type="match status" value="1"/>
</dbReference>
<dbReference type="InterPro" id="IPR002902">
    <property type="entry name" value="GNK2"/>
</dbReference>
<dbReference type="InterPro" id="IPR038408">
    <property type="entry name" value="GNK2_sf"/>
</dbReference>
<dbReference type="InterPro" id="IPR011009">
    <property type="entry name" value="Kinase-like_dom_sf"/>
</dbReference>
<dbReference type="InterPro" id="IPR000719">
    <property type="entry name" value="Prot_kinase_dom"/>
</dbReference>
<dbReference type="InterPro" id="IPR017441">
    <property type="entry name" value="Protein_kinase_ATP_BS"/>
</dbReference>
<dbReference type="InterPro" id="IPR001245">
    <property type="entry name" value="Ser-Thr/Tyr_kinase_cat_dom"/>
</dbReference>
<dbReference type="InterPro" id="IPR008271">
    <property type="entry name" value="Ser/Thr_kinase_AS"/>
</dbReference>
<dbReference type="PANTHER" id="PTHR27002:SF997">
    <property type="entry name" value="CYSTEINE-RICH RECEPTOR-LIKE PROTEIN KINASE 13-RELATED"/>
    <property type="match status" value="1"/>
</dbReference>
<dbReference type="PANTHER" id="PTHR27002">
    <property type="entry name" value="RECEPTOR-LIKE SERINE/THREONINE-PROTEIN KINASE SD1-8"/>
    <property type="match status" value="1"/>
</dbReference>
<dbReference type="Pfam" id="PF07714">
    <property type="entry name" value="PK_Tyr_Ser-Thr"/>
    <property type="match status" value="1"/>
</dbReference>
<dbReference type="Pfam" id="PF01657">
    <property type="entry name" value="Stress-antifung"/>
    <property type="match status" value="2"/>
</dbReference>
<dbReference type="SMART" id="SM00220">
    <property type="entry name" value="S_TKc"/>
    <property type="match status" value="1"/>
</dbReference>
<dbReference type="SUPFAM" id="SSF56112">
    <property type="entry name" value="Protein kinase-like (PK-like)"/>
    <property type="match status" value="1"/>
</dbReference>
<dbReference type="PROSITE" id="PS51473">
    <property type="entry name" value="GNK2"/>
    <property type="match status" value="2"/>
</dbReference>
<dbReference type="PROSITE" id="PS00107">
    <property type="entry name" value="PROTEIN_KINASE_ATP"/>
    <property type="match status" value="1"/>
</dbReference>
<dbReference type="PROSITE" id="PS50011">
    <property type="entry name" value="PROTEIN_KINASE_DOM"/>
    <property type="match status" value="1"/>
</dbReference>
<dbReference type="PROSITE" id="PS00108">
    <property type="entry name" value="PROTEIN_KINASE_ST"/>
    <property type="match status" value="1"/>
</dbReference>
<feature type="signal peptide" evidence="2">
    <location>
        <begin position="1"/>
        <end position="23"/>
    </location>
</feature>
<feature type="chain" id="PRO_0000295067" description="Putative cysteine-rich receptor-like protein kinase 20">
    <location>
        <begin position="24"/>
        <end position="666"/>
    </location>
</feature>
<feature type="topological domain" description="Extracellular" evidence="2">
    <location>
        <begin position="24"/>
        <end position="264"/>
    </location>
</feature>
<feature type="transmembrane region" description="Helical" evidence="2">
    <location>
        <begin position="265"/>
        <end position="285"/>
    </location>
</feature>
<feature type="topological domain" description="Cytoplasmic" evidence="2">
    <location>
        <begin position="286"/>
        <end position="666"/>
    </location>
</feature>
<feature type="domain" description="Gnk2-homologous 1" evidence="4">
    <location>
        <begin position="27"/>
        <end position="131"/>
    </location>
</feature>
<feature type="domain" description="Gnk2-homologous 2" evidence="4">
    <location>
        <begin position="137"/>
        <end position="241"/>
    </location>
</feature>
<feature type="domain" description="Protein kinase" evidence="3">
    <location>
        <begin position="344"/>
        <end position="623"/>
    </location>
</feature>
<feature type="active site" description="Proton acceptor" evidence="3 5">
    <location>
        <position position="469"/>
    </location>
</feature>
<feature type="binding site" evidence="3">
    <location>
        <begin position="350"/>
        <end position="358"/>
    </location>
    <ligand>
        <name>ATP</name>
        <dbReference type="ChEBI" id="CHEBI:30616"/>
    </ligand>
</feature>
<feature type="binding site" evidence="3">
    <location>
        <position position="372"/>
    </location>
    <ligand>
        <name>ATP</name>
        <dbReference type="ChEBI" id="CHEBI:30616"/>
    </ligand>
</feature>
<feature type="modified residue" description="Phosphotyrosine" evidence="1">
    <location>
        <position position="417"/>
    </location>
</feature>
<feature type="modified residue" description="Phosphothreonine" evidence="1">
    <location>
        <position position="509"/>
    </location>
</feature>
<feature type="modified residue" description="Phosphotyrosine" evidence="1">
    <location>
        <position position="517"/>
    </location>
</feature>
<feature type="glycosylation site" description="N-linked (GlcNAc...) asparagine" evidence="2">
    <location>
        <position position="32"/>
    </location>
</feature>
<feature type="glycosylation site" description="N-linked (GlcNAc...) asparagine" evidence="2">
    <location>
        <position position="42"/>
    </location>
</feature>
<feature type="glycosylation site" description="N-linked (GlcNAc...) asparagine" evidence="2">
    <location>
        <position position="60"/>
    </location>
</feature>
<feature type="glycosylation site" description="N-linked (GlcNAc...) asparagine" evidence="2">
    <location>
        <position position="69"/>
    </location>
</feature>
<feature type="glycosylation site" description="N-linked (GlcNAc...) asparagine" evidence="2">
    <location>
        <position position="103"/>
    </location>
</feature>
<feature type="glycosylation site" description="N-linked (GlcNAc...) asparagine" evidence="2">
    <location>
        <position position="262"/>
    </location>
</feature>
<evidence type="ECO:0000250" key="1">
    <source>
        <dbReference type="UniProtKB" id="O48814"/>
    </source>
</evidence>
<evidence type="ECO:0000255" key="2"/>
<evidence type="ECO:0000255" key="3">
    <source>
        <dbReference type="PROSITE-ProRule" id="PRU00159"/>
    </source>
</evidence>
<evidence type="ECO:0000255" key="4">
    <source>
        <dbReference type="PROSITE-ProRule" id="PRU00806"/>
    </source>
</evidence>
<evidence type="ECO:0000255" key="5">
    <source>
        <dbReference type="PROSITE-ProRule" id="PRU10027"/>
    </source>
</evidence>
<evidence type="ECO:0000269" key="6">
    <source>
    </source>
</evidence>
<evidence type="ECO:0000269" key="7">
    <source>
    </source>
</evidence>
<evidence type="ECO:0000305" key="8"/>
<keyword id="KW-0067">ATP-binding</keyword>
<keyword id="KW-0325">Glycoprotein</keyword>
<keyword id="KW-0418">Kinase</keyword>
<keyword id="KW-0472">Membrane</keyword>
<keyword id="KW-0547">Nucleotide-binding</keyword>
<keyword id="KW-0597">Phosphoprotein</keyword>
<keyword id="KW-0675">Receptor</keyword>
<keyword id="KW-1185">Reference proteome</keyword>
<keyword id="KW-0677">Repeat</keyword>
<keyword id="KW-0723">Serine/threonine-protein kinase</keyword>
<keyword id="KW-0732">Signal</keyword>
<keyword id="KW-0808">Transferase</keyword>
<keyword id="KW-0812">Transmembrane</keyword>
<keyword id="KW-1133">Transmembrane helix</keyword>
<reference key="1">
    <citation type="journal article" date="1999" name="Nature">
        <title>Sequence and analysis of chromosome 4 of the plant Arabidopsis thaliana.</title>
        <authorList>
            <person name="Mayer K.F.X."/>
            <person name="Schueller C."/>
            <person name="Wambutt R."/>
            <person name="Murphy G."/>
            <person name="Volckaert G."/>
            <person name="Pohl T."/>
            <person name="Duesterhoeft A."/>
            <person name="Stiekema W."/>
            <person name="Entian K.-D."/>
            <person name="Terryn N."/>
            <person name="Harris B."/>
            <person name="Ansorge W."/>
            <person name="Brandt P."/>
            <person name="Grivell L.A."/>
            <person name="Rieger M."/>
            <person name="Weichselgartner M."/>
            <person name="de Simone V."/>
            <person name="Obermaier B."/>
            <person name="Mache R."/>
            <person name="Mueller M."/>
            <person name="Kreis M."/>
            <person name="Delseny M."/>
            <person name="Puigdomenech P."/>
            <person name="Watson M."/>
            <person name="Schmidtheini T."/>
            <person name="Reichert B."/>
            <person name="Portetelle D."/>
            <person name="Perez-Alonso M."/>
            <person name="Boutry M."/>
            <person name="Bancroft I."/>
            <person name="Vos P."/>
            <person name="Hoheisel J."/>
            <person name="Zimmermann W."/>
            <person name="Wedler H."/>
            <person name="Ridley P."/>
            <person name="Langham S.-A."/>
            <person name="McCullagh B."/>
            <person name="Bilham L."/>
            <person name="Robben J."/>
            <person name="van der Schueren J."/>
            <person name="Grymonprez B."/>
            <person name="Chuang Y.-J."/>
            <person name="Vandenbussche F."/>
            <person name="Braeken M."/>
            <person name="Weltjens I."/>
            <person name="Voet M."/>
            <person name="Bastiaens I."/>
            <person name="Aert R."/>
            <person name="Defoor E."/>
            <person name="Weitzenegger T."/>
            <person name="Bothe G."/>
            <person name="Ramsperger U."/>
            <person name="Hilbert H."/>
            <person name="Braun M."/>
            <person name="Holzer E."/>
            <person name="Brandt A."/>
            <person name="Peters S."/>
            <person name="van Staveren M."/>
            <person name="Dirkse W."/>
            <person name="Mooijman P."/>
            <person name="Klein Lankhorst R."/>
            <person name="Rose M."/>
            <person name="Hauf J."/>
            <person name="Koetter P."/>
            <person name="Berneiser S."/>
            <person name="Hempel S."/>
            <person name="Feldpausch M."/>
            <person name="Lamberth S."/>
            <person name="Van den Daele H."/>
            <person name="De Keyser A."/>
            <person name="Buysshaert C."/>
            <person name="Gielen J."/>
            <person name="Villarroel R."/>
            <person name="De Clercq R."/>
            <person name="van Montagu M."/>
            <person name="Rogers J."/>
            <person name="Cronin A."/>
            <person name="Quail M.A."/>
            <person name="Bray-Allen S."/>
            <person name="Clark L."/>
            <person name="Doggett J."/>
            <person name="Hall S."/>
            <person name="Kay M."/>
            <person name="Lennard N."/>
            <person name="McLay K."/>
            <person name="Mayes R."/>
            <person name="Pettett A."/>
            <person name="Rajandream M.A."/>
            <person name="Lyne M."/>
            <person name="Benes V."/>
            <person name="Rechmann S."/>
            <person name="Borkova D."/>
            <person name="Bloecker H."/>
            <person name="Scharfe M."/>
            <person name="Grimm M."/>
            <person name="Loehnert T.-H."/>
            <person name="Dose S."/>
            <person name="de Haan M."/>
            <person name="Maarse A.C."/>
            <person name="Schaefer M."/>
            <person name="Mueller-Auer S."/>
            <person name="Gabel C."/>
            <person name="Fuchs M."/>
            <person name="Fartmann B."/>
            <person name="Granderath K."/>
            <person name="Dauner D."/>
            <person name="Herzl A."/>
            <person name="Neumann S."/>
            <person name="Argiriou A."/>
            <person name="Vitale D."/>
            <person name="Liguori R."/>
            <person name="Piravandi E."/>
            <person name="Massenet O."/>
            <person name="Quigley F."/>
            <person name="Clabauld G."/>
            <person name="Muendlein A."/>
            <person name="Felber R."/>
            <person name="Schnabl S."/>
            <person name="Hiller R."/>
            <person name="Schmidt W."/>
            <person name="Lecharny A."/>
            <person name="Aubourg S."/>
            <person name="Chefdor F."/>
            <person name="Cooke R."/>
            <person name="Berger C."/>
            <person name="Monfort A."/>
            <person name="Casacuberta E."/>
            <person name="Gibbons T."/>
            <person name="Weber N."/>
            <person name="Vandenbol M."/>
            <person name="Bargues M."/>
            <person name="Terol J."/>
            <person name="Torres A."/>
            <person name="Perez-Perez A."/>
            <person name="Purnelle B."/>
            <person name="Bent E."/>
            <person name="Johnson S."/>
            <person name="Tacon D."/>
            <person name="Jesse T."/>
            <person name="Heijnen L."/>
            <person name="Schwarz S."/>
            <person name="Scholler P."/>
            <person name="Heber S."/>
            <person name="Francs P."/>
            <person name="Bielke C."/>
            <person name="Frishman D."/>
            <person name="Haase D."/>
            <person name="Lemcke K."/>
            <person name="Mewes H.-W."/>
            <person name="Stocker S."/>
            <person name="Zaccaria P."/>
            <person name="Bevan M."/>
            <person name="Wilson R.K."/>
            <person name="de la Bastide M."/>
            <person name="Habermann K."/>
            <person name="Parnell L."/>
            <person name="Dedhia N."/>
            <person name="Gnoj L."/>
            <person name="Schutz K."/>
            <person name="Huang E."/>
            <person name="Spiegel L."/>
            <person name="Sekhon M."/>
            <person name="Murray J."/>
            <person name="Sheet P."/>
            <person name="Cordes M."/>
            <person name="Abu-Threideh J."/>
            <person name="Stoneking T."/>
            <person name="Kalicki J."/>
            <person name="Graves T."/>
            <person name="Harmon G."/>
            <person name="Edwards J."/>
            <person name="Latreille P."/>
            <person name="Courtney L."/>
            <person name="Cloud J."/>
            <person name="Abbott A."/>
            <person name="Scott K."/>
            <person name="Johnson D."/>
            <person name="Minx P."/>
            <person name="Bentley D."/>
            <person name="Fulton B."/>
            <person name="Miller N."/>
            <person name="Greco T."/>
            <person name="Kemp K."/>
            <person name="Kramer J."/>
            <person name="Fulton L."/>
            <person name="Mardis E."/>
            <person name="Dante M."/>
            <person name="Pepin K."/>
            <person name="Hillier L.W."/>
            <person name="Nelson J."/>
            <person name="Spieth J."/>
            <person name="Ryan E."/>
            <person name="Andrews S."/>
            <person name="Geisel C."/>
            <person name="Layman D."/>
            <person name="Du H."/>
            <person name="Ali J."/>
            <person name="Berghoff A."/>
            <person name="Jones K."/>
            <person name="Drone K."/>
            <person name="Cotton M."/>
            <person name="Joshu C."/>
            <person name="Antonoiu B."/>
            <person name="Zidanic M."/>
            <person name="Strong C."/>
            <person name="Sun H."/>
            <person name="Lamar B."/>
            <person name="Yordan C."/>
            <person name="Ma P."/>
            <person name="Zhong J."/>
            <person name="Preston R."/>
            <person name="Vil D."/>
            <person name="Shekher M."/>
            <person name="Matero A."/>
            <person name="Shah R."/>
            <person name="Swaby I.K."/>
            <person name="O'Shaughnessy A."/>
            <person name="Rodriguez M."/>
            <person name="Hoffman J."/>
            <person name="Till S."/>
            <person name="Granat S."/>
            <person name="Shohdy N."/>
            <person name="Hasegawa A."/>
            <person name="Hameed A."/>
            <person name="Lodhi M."/>
            <person name="Johnson A."/>
            <person name="Chen E."/>
            <person name="Marra M.A."/>
            <person name="Martienssen R."/>
            <person name="McCombie W.R."/>
        </authorList>
    </citation>
    <scope>NUCLEOTIDE SEQUENCE [LARGE SCALE GENOMIC DNA]</scope>
    <source>
        <strain>cv. Columbia</strain>
    </source>
</reference>
<reference key="2">
    <citation type="journal article" date="2017" name="Plant J.">
        <title>Araport11: a complete reannotation of the Arabidopsis thaliana reference genome.</title>
        <authorList>
            <person name="Cheng C.Y."/>
            <person name="Krishnakumar V."/>
            <person name="Chan A.P."/>
            <person name="Thibaud-Nissen F."/>
            <person name="Schobel S."/>
            <person name="Town C.D."/>
        </authorList>
    </citation>
    <scope>GENOME REANNOTATION</scope>
    <source>
        <strain>cv. Columbia</strain>
    </source>
</reference>
<reference key="3">
    <citation type="journal article" date="2000" name="Plant Cell Physiol.">
        <title>Salicylic acid induces the expression of a number of receptor-like kinase genes in Arabidopsis thaliana.</title>
        <authorList>
            <person name="Ohtake Y."/>
            <person name="Takahashi T."/>
            <person name="Komeda Y."/>
        </authorList>
    </citation>
    <scope>INDUCTION</scope>
</reference>
<reference key="4">
    <citation type="journal article" date="2001" name="Plant Physiol.">
        <title>A superfamily of proteins with novel cysteine-rich repeats.</title>
        <authorList>
            <person name="Chen Z."/>
        </authorList>
    </citation>
    <scope>GENE FAMILY ORGANIZATION</scope>
    <scope>NOMENCLATURE</scope>
</reference>
<reference key="5">
    <citation type="journal article" date="2004" name="Plant Mol. Biol.">
        <title>Activation of hypersensitive cell death by pathogen-induced receptor-like protein kinases from Arabidopsis.</title>
        <authorList>
            <person name="Chen K."/>
            <person name="Fan B."/>
            <person name="Du L."/>
            <person name="Chen Z."/>
        </authorList>
    </citation>
    <scope>INDUCTION</scope>
</reference>
<name>CRK20_ARATH</name>